<gene>
    <name evidence="1" type="primary">pyrH</name>
    <name type="synonym">smbA</name>
    <name type="ordered locus">BP1421</name>
</gene>
<accession>Q7VYC8</accession>
<evidence type="ECO:0000255" key="1">
    <source>
        <dbReference type="HAMAP-Rule" id="MF_01220"/>
    </source>
</evidence>
<organism>
    <name type="scientific">Bordetella pertussis (strain Tohama I / ATCC BAA-589 / NCTC 13251)</name>
    <dbReference type="NCBI Taxonomy" id="257313"/>
    <lineage>
        <taxon>Bacteria</taxon>
        <taxon>Pseudomonadati</taxon>
        <taxon>Pseudomonadota</taxon>
        <taxon>Betaproteobacteria</taxon>
        <taxon>Burkholderiales</taxon>
        <taxon>Alcaligenaceae</taxon>
        <taxon>Bordetella</taxon>
    </lineage>
</organism>
<proteinExistence type="inferred from homology"/>
<sequence>MSSRSYKRVLLKLSGEALMGEDAFGINRSTIVRMTDEIAEVAALGVELAIVIGGGNIFRGVAPGAQGMDRATADYMGMMATIMNALALQDALKHKGVDTRVQSALNIDQVVEPYIRPKALRYLEEGKVVIFAAGTGNPFFTTDTAAALRGAEIGAEIVLKATKVDGIYSADPNKDPTATRYARISFDEVIVRRLEVMDATAFALCRDQKLPIKVFSINKSGALKRAVSGEDEGTLVHV</sequence>
<protein>
    <recommendedName>
        <fullName evidence="1">Uridylate kinase</fullName>
        <shortName evidence="1">UK</shortName>
        <ecNumber evidence="1">2.7.4.22</ecNumber>
    </recommendedName>
    <alternativeName>
        <fullName evidence="1">Uridine monophosphate kinase</fullName>
        <shortName evidence="1">UMP kinase</shortName>
        <shortName evidence="1">UMPK</shortName>
    </alternativeName>
</protein>
<feature type="chain" id="PRO_0000323800" description="Uridylate kinase">
    <location>
        <begin position="1"/>
        <end position="238"/>
    </location>
</feature>
<feature type="binding site" evidence="1">
    <location>
        <begin position="12"/>
        <end position="15"/>
    </location>
    <ligand>
        <name>ATP</name>
        <dbReference type="ChEBI" id="CHEBI:30616"/>
    </ligand>
</feature>
<feature type="binding site" evidence="1">
    <location>
        <position position="54"/>
    </location>
    <ligand>
        <name>UMP</name>
        <dbReference type="ChEBI" id="CHEBI:57865"/>
    </ligand>
</feature>
<feature type="binding site" evidence="1">
    <location>
        <position position="55"/>
    </location>
    <ligand>
        <name>ATP</name>
        <dbReference type="ChEBI" id="CHEBI:30616"/>
    </ligand>
</feature>
<feature type="binding site" evidence="1">
    <location>
        <position position="59"/>
    </location>
    <ligand>
        <name>ATP</name>
        <dbReference type="ChEBI" id="CHEBI:30616"/>
    </ligand>
</feature>
<feature type="binding site" evidence="1">
    <location>
        <position position="74"/>
    </location>
    <ligand>
        <name>UMP</name>
        <dbReference type="ChEBI" id="CHEBI:57865"/>
    </ligand>
</feature>
<feature type="binding site" evidence="1">
    <location>
        <begin position="135"/>
        <end position="142"/>
    </location>
    <ligand>
        <name>UMP</name>
        <dbReference type="ChEBI" id="CHEBI:57865"/>
    </ligand>
</feature>
<feature type="binding site" evidence="1">
    <location>
        <position position="162"/>
    </location>
    <ligand>
        <name>ATP</name>
        <dbReference type="ChEBI" id="CHEBI:30616"/>
    </ligand>
</feature>
<feature type="binding site" evidence="1">
    <location>
        <position position="168"/>
    </location>
    <ligand>
        <name>ATP</name>
        <dbReference type="ChEBI" id="CHEBI:30616"/>
    </ligand>
</feature>
<feature type="binding site" evidence="1">
    <location>
        <position position="171"/>
    </location>
    <ligand>
        <name>ATP</name>
        <dbReference type="ChEBI" id="CHEBI:30616"/>
    </ligand>
</feature>
<reference key="1">
    <citation type="journal article" date="2003" name="Nat. Genet.">
        <title>Comparative analysis of the genome sequences of Bordetella pertussis, Bordetella parapertussis and Bordetella bronchiseptica.</title>
        <authorList>
            <person name="Parkhill J."/>
            <person name="Sebaihia M."/>
            <person name="Preston A."/>
            <person name="Murphy L.D."/>
            <person name="Thomson N.R."/>
            <person name="Harris D.E."/>
            <person name="Holden M.T.G."/>
            <person name="Churcher C.M."/>
            <person name="Bentley S.D."/>
            <person name="Mungall K.L."/>
            <person name="Cerdeno-Tarraga A.-M."/>
            <person name="Temple L."/>
            <person name="James K.D."/>
            <person name="Harris B."/>
            <person name="Quail M.A."/>
            <person name="Achtman M."/>
            <person name="Atkin R."/>
            <person name="Baker S."/>
            <person name="Basham D."/>
            <person name="Bason N."/>
            <person name="Cherevach I."/>
            <person name="Chillingworth T."/>
            <person name="Collins M."/>
            <person name="Cronin A."/>
            <person name="Davis P."/>
            <person name="Doggett J."/>
            <person name="Feltwell T."/>
            <person name="Goble A."/>
            <person name="Hamlin N."/>
            <person name="Hauser H."/>
            <person name="Holroyd S."/>
            <person name="Jagels K."/>
            <person name="Leather S."/>
            <person name="Moule S."/>
            <person name="Norberczak H."/>
            <person name="O'Neil S."/>
            <person name="Ormond D."/>
            <person name="Price C."/>
            <person name="Rabbinowitsch E."/>
            <person name="Rutter S."/>
            <person name="Sanders M."/>
            <person name="Saunders D."/>
            <person name="Seeger K."/>
            <person name="Sharp S."/>
            <person name="Simmonds M."/>
            <person name="Skelton J."/>
            <person name="Squares R."/>
            <person name="Squares S."/>
            <person name="Stevens K."/>
            <person name="Unwin L."/>
            <person name="Whitehead S."/>
            <person name="Barrell B.G."/>
            <person name="Maskell D.J."/>
        </authorList>
    </citation>
    <scope>NUCLEOTIDE SEQUENCE [LARGE SCALE GENOMIC DNA]</scope>
    <source>
        <strain>Tohama I / ATCC BAA-589 / NCTC 13251</strain>
    </source>
</reference>
<comment type="function">
    <text evidence="1">Catalyzes the reversible phosphorylation of UMP to UDP.</text>
</comment>
<comment type="catalytic activity">
    <reaction evidence="1">
        <text>UMP + ATP = UDP + ADP</text>
        <dbReference type="Rhea" id="RHEA:24400"/>
        <dbReference type="ChEBI" id="CHEBI:30616"/>
        <dbReference type="ChEBI" id="CHEBI:57865"/>
        <dbReference type="ChEBI" id="CHEBI:58223"/>
        <dbReference type="ChEBI" id="CHEBI:456216"/>
        <dbReference type="EC" id="2.7.4.22"/>
    </reaction>
</comment>
<comment type="activity regulation">
    <text evidence="1">Inhibited by UTP.</text>
</comment>
<comment type="pathway">
    <text evidence="1">Pyrimidine metabolism; CTP biosynthesis via de novo pathway; UDP from UMP (UMPK route): step 1/1.</text>
</comment>
<comment type="subunit">
    <text evidence="1">Homohexamer.</text>
</comment>
<comment type="subcellular location">
    <subcellularLocation>
        <location evidence="1">Cytoplasm</location>
    </subcellularLocation>
</comment>
<comment type="similarity">
    <text evidence="1">Belongs to the UMP kinase family.</text>
</comment>
<dbReference type="EC" id="2.7.4.22" evidence="1"/>
<dbReference type="EMBL" id="BX640415">
    <property type="protein sequence ID" value="CAE41711.1"/>
    <property type="molecule type" value="Genomic_DNA"/>
</dbReference>
<dbReference type="RefSeq" id="NP_880163.1">
    <property type="nucleotide sequence ID" value="NC_002929.2"/>
</dbReference>
<dbReference type="RefSeq" id="WP_010930349.1">
    <property type="nucleotide sequence ID" value="NZ_CP039022.1"/>
</dbReference>
<dbReference type="SMR" id="Q7VYC8"/>
<dbReference type="STRING" id="257313.BP1421"/>
<dbReference type="PaxDb" id="257313-BP1421"/>
<dbReference type="GeneID" id="69601332"/>
<dbReference type="KEGG" id="bpe:BP1421"/>
<dbReference type="PATRIC" id="fig|257313.5.peg.1524"/>
<dbReference type="eggNOG" id="COG0528">
    <property type="taxonomic scope" value="Bacteria"/>
</dbReference>
<dbReference type="HOGENOM" id="CLU_033861_0_0_4"/>
<dbReference type="UniPathway" id="UPA00159">
    <property type="reaction ID" value="UER00275"/>
</dbReference>
<dbReference type="Proteomes" id="UP000002676">
    <property type="component" value="Chromosome"/>
</dbReference>
<dbReference type="GO" id="GO:0005829">
    <property type="term" value="C:cytosol"/>
    <property type="evidence" value="ECO:0007669"/>
    <property type="project" value="TreeGrafter"/>
</dbReference>
<dbReference type="GO" id="GO:0005524">
    <property type="term" value="F:ATP binding"/>
    <property type="evidence" value="ECO:0007669"/>
    <property type="project" value="UniProtKB-KW"/>
</dbReference>
<dbReference type="GO" id="GO:0033862">
    <property type="term" value="F:UMP kinase activity"/>
    <property type="evidence" value="ECO:0007669"/>
    <property type="project" value="UniProtKB-EC"/>
</dbReference>
<dbReference type="GO" id="GO:0044210">
    <property type="term" value="P:'de novo' CTP biosynthetic process"/>
    <property type="evidence" value="ECO:0007669"/>
    <property type="project" value="UniProtKB-UniRule"/>
</dbReference>
<dbReference type="GO" id="GO:0006225">
    <property type="term" value="P:UDP biosynthetic process"/>
    <property type="evidence" value="ECO:0007669"/>
    <property type="project" value="TreeGrafter"/>
</dbReference>
<dbReference type="CDD" id="cd04254">
    <property type="entry name" value="AAK_UMPK-PyrH-Ec"/>
    <property type="match status" value="1"/>
</dbReference>
<dbReference type="FunFam" id="3.40.1160.10:FF:000001">
    <property type="entry name" value="Uridylate kinase"/>
    <property type="match status" value="1"/>
</dbReference>
<dbReference type="Gene3D" id="3.40.1160.10">
    <property type="entry name" value="Acetylglutamate kinase-like"/>
    <property type="match status" value="1"/>
</dbReference>
<dbReference type="HAMAP" id="MF_01220_B">
    <property type="entry name" value="PyrH_B"/>
    <property type="match status" value="1"/>
</dbReference>
<dbReference type="InterPro" id="IPR036393">
    <property type="entry name" value="AceGlu_kinase-like_sf"/>
</dbReference>
<dbReference type="InterPro" id="IPR001048">
    <property type="entry name" value="Asp/Glu/Uridylate_kinase"/>
</dbReference>
<dbReference type="InterPro" id="IPR011817">
    <property type="entry name" value="Uridylate_kinase"/>
</dbReference>
<dbReference type="InterPro" id="IPR015963">
    <property type="entry name" value="Uridylate_kinase_bac"/>
</dbReference>
<dbReference type="NCBIfam" id="TIGR02075">
    <property type="entry name" value="pyrH_bact"/>
    <property type="match status" value="1"/>
</dbReference>
<dbReference type="PANTHER" id="PTHR42833">
    <property type="entry name" value="URIDYLATE KINASE"/>
    <property type="match status" value="1"/>
</dbReference>
<dbReference type="PANTHER" id="PTHR42833:SF4">
    <property type="entry name" value="URIDYLATE KINASE PUMPKIN, CHLOROPLASTIC"/>
    <property type="match status" value="1"/>
</dbReference>
<dbReference type="Pfam" id="PF00696">
    <property type="entry name" value="AA_kinase"/>
    <property type="match status" value="1"/>
</dbReference>
<dbReference type="PIRSF" id="PIRSF005650">
    <property type="entry name" value="Uridylate_kin"/>
    <property type="match status" value="1"/>
</dbReference>
<dbReference type="SUPFAM" id="SSF53633">
    <property type="entry name" value="Carbamate kinase-like"/>
    <property type="match status" value="1"/>
</dbReference>
<keyword id="KW-0067">ATP-binding</keyword>
<keyword id="KW-0963">Cytoplasm</keyword>
<keyword id="KW-0418">Kinase</keyword>
<keyword id="KW-0547">Nucleotide-binding</keyword>
<keyword id="KW-0665">Pyrimidine biosynthesis</keyword>
<keyword id="KW-1185">Reference proteome</keyword>
<keyword id="KW-0808">Transferase</keyword>
<name>PYRH_BORPE</name>